<accession>P34704</accession>
<gene>
    <name type="primary">her-1</name>
    <name type="ORF">ZK287.8</name>
</gene>
<proteinExistence type="evidence at protein level"/>
<name>HER1_CAEEL</name>
<reference key="1">
    <citation type="journal article" date="1993" name="Genes Dev.">
        <title>Molecular characterization of the her-1 gene suggests a direct role in cell signaling during Caenorhabditis elegans sex determination.</title>
        <authorList>
            <person name="Perry M.D."/>
            <person name="Li W."/>
            <person name="Trent C."/>
            <person name="Robertson B."/>
            <person name="Fire A."/>
            <person name="Hageman J.M."/>
            <person name="Wood W.B."/>
        </authorList>
    </citation>
    <scope>NUCLEOTIDE SEQUENCE [GENOMIC DNA] (ISOFORMS LONG AND SHORT)</scope>
    <source>
        <strain>Bristol N2</strain>
    </source>
</reference>
<reference key="2">
    <citation type="journal article" date="1998" name="Science">
        <title>Genome sequence of the nematode C. elegans: a platform for investigating biology.</title>
        <authorList>
            <consortium name="The C. elegans sequencing consortium"/>
        </authorList>
    </citation>
    <scope>NUCLEOTIDE SEQUENCE [LARGE SCALE GENOMIC DNA]</scope>
    <source>
        <strain>Bristol N2</strain>
    </source>
</reference>
<reference key="3">
    <citation type="journal article" date="2004" name="Proc. Natl. Acad. Sci. U.S.A.">
        <title>Crystal structure of Caenorhabditis elegans HER-1 and characterization of the interaction between HER-1 and TRA-2A.</title>
        <authorList>
            <person name="Hamaoka B.Y."/>
            <person name="Dann C.E. III"/>
            <person name="Geisbrecht B.V."/>
            <person name="Leahy D.J."/>
        </authorList>
    </citation>
    <scope>X-RAY CRYSTALLOGRAPHY (1.5 ANGSTROMS) OF 19-375</scope>
</reference>
<organism>
    <name type="scientific">Caenorhabditis elegans</name>
    <dbReference type="NCBI Taxonomy" id="6239"/>
    <lineage>
        <taxon>Eukaryota</taxon>
        <taxon>Metazoa</taxon>
        <taxon>Ecdysozoa</taxon>
        <taxon>Nematoda</taxon>
        <taxon>Chromadorea</taxon>
        <taxon>Rhabditida</taxon>
        <taxon>Rhabditina</taxon>
        <taxon>Rhabditomorpha</taxon>
        <taxon>Rhabditoidea</taxon>
        <taxon>Rhabditidae</taxon>
        <taxon>Peloderinae</taxon>
        <taxon>Caenorhabditis</taxon>
    </lineage>
</organism>
<dbReference type="EMBL" id="Z19595">
    <property type="protein sequence ID" value="CAA79650.1"/>
    <property type="molecule type" value="Genomic_DNA"/>
</dbReference>
<dbReference type="EMBL" id="Z19595">
    <property type="protein sequence ID" value="CAA79651.1"/>
    <property type="molecule type" value="Genomic_DNA"/>
</dbReference>
<dbReference type="EMBL" id="Z70757">
    <property type="protein sequence ID" value="CAA94804.1"/>
    <property type="molecule type" value="Genomic_DNA"/>
</dbReference>
<dbReference type="PIR" id="A46388">
    <property type="entry name" value="A46388"/>
</dbReference>
<dbReference type="RefSeq" id="NP_001024310.1">
    <molecule id="P34704-1"/>
    <property type="nucleotide sequence ID" value="NM_001029139.3"/>
</dbReference>
<dbReference type="RefSeq" id="NP_001024311.2">
    <molecule id="P34704-2"/>
    <property type="nucleotide sequence ID" value="NM_001029140.5"/>
</dbReference>
<dbReference type="PDB" id="1SZH">
    <property type="method" value="X-ray"/>
    <property type="resolution" value="1.50 A"/>
    <property type="chains" value="A/B=19-175"/>
</dbReference>
<dbReference type="PDBsum" id="1SZH"/>
<dbReference type="SMR" id="P34704"/>
<dbReference type="BioGRID" id="44396">
    <property type="interactions" value="44"/>
</dbReference>
<dbReference type="DIP" id="DIP-26672N"/>
<dbReference type="FunCoup" id="P34704">
    <property type="interactions" value="141"/>
</dbReference>
<dbReference type="STRING" id="6239.ZK287.8a.1"/>
<dbReference type="GlyCosmos" id="P34704">
    <property type="glycosylation" value="2 sites, No reported glycans"/>
</dbReference>
<dbReference type="PaxDb" id="6239-ZK287.8a"/>
<dbReference type="EnsemblMetazoa" id="ZK287.8a.1">
    <molecule id="P34704-1"/>
    <property type="protein sequence ID" value="ZK287.8a.1"/>
    <property type="gene ID" value="WBGene00001842"/>
</dbReference>
<dbReference type="GeneID" id="179360"/>
<dbReference type="KEGG" id="cel:CELE_ZK287.8"/>
<dbReference type="UCSC" id="ZK287.8a">
    <molecule id="P34704-1"/>
    <property type="organism name" value="c. elegans"/>
</dbReference>
<dbReference type="AGR" id="WB:WBGene00001842"/>
<dbReference type="CTD" id="179360"/>
<dbReference type="WormBase" id="ZK287.8a">
    <molecule id="P34704-1"/>
    <property type="protein sequence ID" value="CE06617"/>
    <property type="gene ID" value="WBGene00001842"/>
    <property type="gene designation" value="her-1"/>
</dbReference>
<dbReference type="eggNOG" id="ENOG502SXJG">
    <property type="taxonomic scope" value="Eukaryota"/>
</dbReference>
<dbReference type="HOGENOM" id="CLU_1533954_0_0_1"/>
<dbReference type="InParanoid" id="P34704"/>
<dbReference type="OMA" id="CCDVFAD"/>
<dbReference type="OrthoDB" id="5845964at2759"/>
<dbReference type="EvolutionaryTrace" id="P34704"/>
<dbReference type="PRO" id="PR:P34704"/>
<dbReference type="Proteomes" id="UP000001940">
    <property type="component" value="Chromosome V"/>
</dbReference>
<dbReference type="Bgee" id="WBGene00001842">
    <property type="expression patterns" value="Expressed in embryo and 3 other cell types or tissues"/>
</dbReference>
<dbReference type="ExpressionAtlas" id="P34704">
    <property type="expression patterns" value="baseline"/>
</dbReference>
<dbReference type="GO" id="GO:0005576">
    <property type="term" value="C:extracellular region"/>
    <property type="evidence" value="ECO:0000314"/>
    <property type="project" value="WormBase"/>
</dbReference>
<dbReference type="GO" id="GO:0005102">
    <property type="term" value="F:signaling receptor binding"/>
    <property type="evidence" value="ECO:0000314"/>
    <property type="project" value="WormBase"/>
</dbReference>
<dbReference type="GO" id="GO:0030238">
    <property type="term" value="P:male sex determination"/>
    <property type="evidence" value="ECO:0000315"/>
    <property type="project" value="WormBase"/>
</dbReference>
<dbReference type="DisProt" id="DP02988"/>
<dbReference type="Gene3D" id="1.10.150.360">
    <property type="match status" value="1"/>
</dbReference>
<dbReference type="Gene3D" id="1.10.150.370">
    <property type="entry name" value="Caenorhabditis elegans Her-1, C-terminal domain"/>
    <property type="match status" value="1"/>
</dbReference>
<dbReference type="InterPro" id="IPR015313">
    <property type="entry name" value="Her-1"/>
</dbReference>
<dbReference type="InterPro" id="IPR043108">
    <property type="entry name" value="Her-1_C"/>
</dbReference>
<dbReference type="InterPro" id="IPR036341">
    <property type="entry name" value="Her-1_sf"/>
</dbReference>
<dbReference type="PANTHER" id="PTHR37979">
    <property type="entry name" value="PROTEIN HER-1"/>
    <property type="match status" value="1"/>
</dbReference>
<dbReference type="PANTHER" id="PTHR37979:SF1">
    <property type="entry name" value="PROTEIN HER-1"/>
    <property type="match status" value="1"/>
</dbReference>
<dbReference type="Pfam" id="PF09232">
    <property type="entry name" value="Caenor_Her-1"/>
    <property type="match status" value="1"/>
</dbReference>
<dbReference type="SUPFAM" id="SSF110014">
    <property type="entry name" value="Her-1"/>
    <property type="match status" value="1"/>
</dbReference>
<comment type="function">
    <text>Dictates male development. Probably plays a direct role in cell signaling during C.elegans sex determination. Inhibits the function of tra-2a.</text>
</comment>
<comment type="subcellular location">
    <subcellularLocation>
        <location>Secreted</location>
    </subcellularLocation>
</comment>
<comment type="alternative products">
    <event type="alternative splicing"/>
    <isoform>
        <id>P34704-1</id>
        <name>Long</name>
        <sequence type="displayed"/>
    </isoform>
    <isoform>
        <id>P34704-2</id>
        <name>Short</name>
        <sequence type="described" ref="VSP_004283"/>
    </isoform>
</comment>
<comment type="miscellaneous">
    <molecule>Isoform Long</molecule>
    <text>Active.</text>
</comment>
<comment type="miscellaneous">
    <molecule>Isoform Short</molecule>
    <text evidence="2">Inactive.</text>
</comment>
<sequence length="175" mass="20172">MRYLPIFVFLGSFGYTETTLTKELIKDAAEKCCTRNRQECCIEIMKFGTPIRCGYDRDPKLPGYVYKCLQNVLFAKEPKKKINLDDSVCCSVFGNDQNDSGRRCENRCKNLMTSPSIDAATRLDSIKSCSLLDNVLYKCFEKCRSLRKDGIKIEVLQFEEYCNATFIQKRTFRGV</sequence>
<feature type="signal peptide" evidence="1">
    <location>
        <begin position="1"/>
        <end position="18"/>
    </location>
</feature>
<feature type="chain" id="PRO_0000021412" description="Protein her-1">
    <location>
        <begin position="19"/>
        <end position="175"/>
    </location>
</feature>
<feature type="glycosylation site" description="N-linked (GlcNAc...) asparagine" evidence="1">
    <location>
        <position position="98"/>
    </location>
</feature>
<feature type="glycosylation site" description="N-linked (GlcNAc...) asparagine" evidence="1">
    <location>
        <position position="163"/>
    </location>
</feature>
<feature type="splice variant" id="VSP_004283" description="In isoform Short." evidence="2">
    <location>
        <begin position="1"/>
        <end position="111"/>
    </location>
</feature>
<feature type="helix" evidence="3">
    <location>
        <begin position="22"/>
        <end position="32"/>
    </location>
</feature>
<feature type="helix" evidence="3">
    <location>
        <begin position="35"/>
        <end position="37"/>
    </location>
</feature>
<feature type="helix" evidence="3">
    <location>
        <begin position="38"/>
        <end position="47"/>
    </location>
</feature>
<feature type="helix" evidence="3">
    <location>
        <begin position="61"/>
        <end position="73"/>
    </location>
</feature>
<feature type="helix" evidence="3">
    <location>
        <begin position="78"/>
        <end position="80"/>
    </location>
</feature>
<feature type="helix" evidence="3">
    <location>
        <begin position="84"/>
        <end position="95"/>
    </location>
</feature>
<feature type="helix" evidence="3">
    <location>
        <begin position="99"/>
        <end position="111"/>
    </location>
</feature>
<feature type="helix" evidence="3">
    <location>
        <begin position="119"/>
        <end position="129"/>
    </location>
</feature>
<feature type="turn" evidence="3">
    <location>
        <begin position="130"/>
        <end position="132"/>
    </location>
</feature>
<feature type="helix" evidence="3">
    <location>
        <begin position="134"/>
        <end position="148"/>
    </location>
</feature>
<feature type="helix" evidence="3">
    <location>
        <begin position="153"/>
        <end position="155"/>
    </location>
</feature>
<feature type="helix" evidence="3">
    <location>
        <begin position="158"/>
        <end position="160"/>
    </location>
</feature>
<keyword id="KW-0002">3D-structure</keyword>
<keyword id="KW-0025">Alternative splicing</keyword>
<keyword id="KW-0217">Developmental protein</keyword>
<keyword id="KW-0325">Glycoprotein</keyword>
<keyword id="KW-1185">Reference proteome</keyword>
<keyword id="KW-0964">Secreted</keyword>
<keyword id="KW-0732">Signal</keyword>
<protein>
    <recommendedName>
        <fullName>Protein her-1</fullName>
    </recommendedName>
    <alternativeName>
        <fullName>Hermaphrodization of XO animals protein 1</fullName>
    </alternativeName>
</protein>
<evidence type="ECO:0000255" key="1"/>
<evidence type="ECO:0000305" key="2"/>
<evidence type="ECO:0007829" key="3">
    <source>
        <dbReference type="PDB" id="1SZH"/>
    </source>
</evidence>